<keyword id="KW-0002">3D-structure</keyword>
<keyword id="KW-0349">Heme</keyword>
<keyword id="KW-0408">Iron</keyword>
<keyword id="KW-0479">Metal-binding</keyword>
<keyword id="KW-0503">Monooxygenase</keyword>
<keyword id="KW-0560">Oxidoreductase</keyword>
<keyword id="KW-1185">Reference proteome</keyword>
<reference key="1">
    <citation type="submission" date="1997-07" db="EMBL/GenBank/DDBJ databases">
        <title>Sequence analysis of the 70kb region between 17 and 23 degree of the Bacillus subtilis chromosome.</title>
        <authorList>
            <person name="Haga K."/>
            <person name="Liu H."/>
            <person name="Yasumoto K."/>
            <person name="Takahashi H."/>
            <person name="Yoshikawa H."/>
        </authorList>
    </citation>
    <scope>NUCLEOTIDE SEQUENCE [GENOMIC DNA]</scope>
    <source>
        <strain>168</strain>
    </source>
</reference>
<reference key="2">
    <citation type="journal article" date="1999" name="Lipids">
        <title>Characterization of the ybdT gene product of Bacillus subtilis: novel fatty acid beta-hydroxylating cytochrome P450.</title>
        <authorList>
            <person name="Matsunaga I."/>
            <person name="Ueda A."/>
            <person name="Fujiwara N."/>
            <person name="Sumimoto T."/>
            <person name="Ichihara K."/>
        </authorList>
    </citation>
    <scope>NUCLEOTIDE SEQUENCE [GENOMIC DNA]</scope>
    <scope>IDENTIFICATION</scope>
    <scope>CATALYTIC ACTIVITY</scope>
    <scope>FUNCTION</scope>
    <source>
        <strain>NBRC 14144 / BSF 11</strain>
    </source>
</reference>
<reference key="3">
    <citation type="journal article" date="1997" name="Nature">
        <title>The complete genome sequence of the Gram-positive bacterium Bacillus subtilis.</title>
        <authorList>
            <person name="Kunst F."/>
            <person name="Ogasawara N."/>
            <person name="Moszer I."/>
            <person name="Albertini A.M."/>
            <person name="Alloni G."/>
            <person name="Azevedo V."/>
            <person name="Bertero M.G."/>
            <person name="Bessieres P."/>
            <person name="Bolotin A."/>
            <person name="Borchert S."/>
            <person name="Borriss R."/>
            <person name="Boursier L."/>
            <person name="Brans A."/>
            <person name="Braun M."/>
            <person name="Brignell S.C."/>
            <person name="Bron S."/>
            <person name="Brouillet S."/>
            <person name="Bruschi C.V."/>
            <person name="Caldwell B."/>
            <person name="Capuano V."/>
            <person name="Carter N.M."/>
            <person name="Choi S.-K."/>
            <person name="Codani J.-J."/>
            <person name="Connerton I.F."/>
            <person name="Cummings N.J."/>
            <person name="Daniel R.A."/>
            <person name="Denizot F."/>
            <person name="Devine K.M."/>
            <person name="Duesterhoeft A."/>
            <person name="Ehrlich S.D."/>
            <person name="Emmerson P.T."/>
            <person name="Entian K.-D."/>
            <person name="Errington J."/>
            <person name="Fabret C."/>
            <person name="Ferrari E."/>
            <person name="Foulger D."/>
            <person name="Fritz C."/>
            <person name="Fujita M."/>
            <person name="Fujita Y."/>
            <person name="Fuma S."/>
            <person name="Galizzi A."/>
            <person name="Galleron N."/>
            <person name="Ghim S.-Y."/>
            <person name="Glaser P."/>
            <person name="Goffeau A."/>
            <person name="Golightly E.J."/>
            <person name="Grandi G."/>
            <person name="Guiseppi G."/>
            <person name="Guy B.J."/>
            <person name="Haga K."/>
            <person name="Haiech J."/>
            <person name="Harwood C.R."/>
            <person name="Henaut A."/>
            <person name="Hilbert H."/>
            <person name="Holsappel S."/>
            <person name="Hosono S."/>
            <person name="Hullo M.-F."/>
            <person name="Itaya M."/>
            <person name="Jones L.-M."/>
            <person name="Joris B."/>
            <person name="Karamata D."/>
            <person name="Kasahara Y."/>
            <person name="Klaerr-Blanchard M."/>
            <person name="Klein C."/>
            <person name="Kobayashi Y."/>
            <person name="Koetter P."/>
            <person name="Koningstein G."/>
            <person name="Krogh S."/>
            <person name="Kumano M."/>
            <person name="Kurita K."/>
            <person name="Lapidus A."/>
            <person name="Lardinois S."/>
            <person name="Lauber J."/>
            <person name="Lazarevic V."/>
            <person name="Lee S.-M."/>
            <person name="Levine A."/>
            <person name="Liu H."/>
            <person name="Masuda S."/>
            <person name="Mauel C."/>
            <person name="Medigue C."/>
            <person name="Medina N."/>
            <person name="Mellado R.P."/>
            <person name="Mizuno M."/>
            <person name="Moestl D."/>
            <person name="Nakai S."/>
            <person name="Noback M."/>
            <person name="Noone D."/>
            <person name="O'Reilly M."/>
            <person name="Ogawa K."/>
            <person name="Ogiwara A."/>
            <person name="Oudega B."/>
            <person name="Park S.-H."/>
            <person name="Parro V."/>
            <person name="Pohl T.M."/>
            <person name="Portetelle D."/>
            <person name="Porwollik S."/>
            <person name="Prescott A.M."/>
            <person name="Presecan E."/>
            <person name="Pujic P."/>
            <person name="Purnelle B."/>
            <person name="Rapoport G."/>
            <person name="Rey M."/>
            <person name="Reynolds S."/>
            <person name="Rieger M."/>
            <person name="Rivolta C."/>
            <person name="Rocha E."/>
            <person name="Roche B."/>
            <person name="Rose M."/>
            <person name="Sadaie Y."/>
            <person name="Sato T."/>
            <person name="Scanlan E."/>
            <person name="Schleich S."/>
            <person name="Schroeter R."/>
            <person name="Scoffone F."/>
            <person name="Sekiguchi J."/>
            <person name="Sekowska A."/>
            <person name="Seror S.J."/>
            <person name="Serror P."/>
            <person name="Shin B.-S."/>
            <person name="Soldo B."/>
            <person name="Sorokin A."/>
            <person name="Tacconi E."/>
            <person name="Takagi T."/>
            <person name="Takahashi H."/>
            <person name="Takemaru K."/>
            <person name="Takeuchi M."/>
            <person name="Tamakoshi A."/>
            <person name="Tanaka T."/>
            <person name="Terpstra P."/>
            <person name="Tognoni A."/>
            <person name="Tosato V."/>
            <person name="Uchiyama S."/>
            <person name="Vandenbol M."/>
            <person name="Vannier F."/>
            <person name="Vassarotti A."/>
            <person name="Viari A."/>
            <person name="Wambutt R."/>
            <person name="Wedler E."/>
            <person name="Wedler H."/>
            <person name="Weitzenegger T."/>
            <person name="Winters P."/>
            <person name="Wipat A."/>
            <person name="Yamamoto H."/>
            <person name="Yamane K."/>
            <person name="Yasumoto K."/>
            <person name="Yata K."/>
            <person name="Yoshida K."/>
            <person name="Yoshikawa H.-F."/>
            <person name="Zumstein E."/>
            <person name="Yoshikawa H."/>
            <person name="Danchin A."/>
        </authorList>
    </citation>
    <scope>NUCLEOTIDE SEQUENCE [LARGE SCALE GENOMIC DNA]</scope>
    <source>
        <strain>168</strain>
    </source>
</reference>
<reference evidence="4" key="4">
    <citation type="journal article" date="2003" name="J. Biol. Chem.">
        <title>Substrate recognition and molecular mechanism of fatty acid hydroxylation by cytochrome P450 from Bacillus subtilis: crystallographic, spectroscopic and mutational studies.</title>
        <authorList>
            <person name="Lee D.-S."/>
            <person name="Yamada A."/>
            <person name="Sugimoto H."/>
            <person name="Matsunaga I."/>
            <person name="Ogura H."/>
            <person name="Ichihara K."/>
            <person name="Adachi S."/>
            <person name="Park S.-Y."/>
            <person name="Shiro Y."/>
        </authorList>
    </citation>
    <scope>X-RAY CRYSTALLOGRAPHY (2.1 ANGSTROMS) IN COMPLEX WITH HEME</scope>
    <scope>RESONANCE RAMAN SPECTROSCOPY</scope>
    <scope>COFACTOR</scope>
</reference>
<sequence>MNEQIPHDKSLDNSLTLLKEGYLFIKNRTERYNSDLFQARLLGKNFICMTGAEAAKVFYDTDRFQRQNALPKRVQKSLFGVNAIQGMDGSAHIHRKMLFLSLMTPPHQKRLAELMTEEWKAAVTRWEKADEVVLFEEAKEILCRVACYWAGVPLKETEVKERADDFIDMVDAFGAVGPRHWKGRRARPRAEEWIEVMIEDARAGLLKTTSGTALHEMAFHTQEDGSQLDSRMAAIELINVLRPIVAISYFLVFSALALHEHPKYKEWLRSGNSREREMFVQEVRRYYPFGPFLGALVKKDFVWNNCEFKKGTSVLLDLYGTNHDPRLWDHPDEFRPERFAEREENLFDMIPQGGGHAEKGHRCPGEGITIEVMKASLDFLVHQIEYDVPEQSLHYSLARMPSLPESGFVMSGIRRKS</sequence>
<name>CYPC_BACSU</name>
<accession>O31440</accession>
<organism>
    <name type="scientific">Bacillus subtilis (strain 168)</name>
    <dbReference type="NCBI Taxonomy" id="224308"/>
    <lineage>
        <taxon>Bacteria</taxon>
        <taxon>Bacillati</taxon>
        <taxon>Bacillota</taxon>
        <taxon>Bacilli</taxon>
        <taxon>Bacillales</taxon>
        <taxon>Bacillaceae</taxon>
        <taxon>Bacillus</taxon>
    </lineage>
</organism>
<feature type="chain" id="PRO_0000052235" description="Fatty-acid peroxygenase">
    <location>
        <begin position="1"/>
        <end position="417"/>
    </location>
</feature>
<feature type="binding site" description="axial binding residue" evidence="2">
    <location>
        <position position="363"/>
    </location>
    <ligand>
        <name>heme</name>
        <dbReference type="ChEBI" id="CHEBI:30413"/>
    </ligand>
    <ligandPart>
        <name>Fe</name>
        <dbReference type="ChEBI" id="CHEBI:18248"/>
    </ligandPart>
</feature>
<feature type="helix" evidence="6">
    <location>
        <begin position="14"/>
        <end position="20"/>
    </location>
</feature>
<feature type="helix" evidence="6">
    <location>
        <begin position="21"/>
        <end position="23"/>
    </location>
</feature>
<feature type="helix" evidence="6">
    <location>
        <begin position="24"/>
        <end position="31"/>
    </location>
</feature>
<feature type="strand" evidence="6">
    <location>
        <begin position="34"/>
        <end position="41"/>
    </location>
</feature>
<feature type="strand" evidence="6">
    <location>
        <begin position="44"/>
        <end position="51"/>
    </location>
</feature>
<feature type="helix" evidence="6">
    <location>
        <begin position="52"/>
        <end position="58"/>
    </location>
</feature>
<feature type="turn" evidence="6">
    <location>
        <begin position="61"/>
        <end position="63"/>
    </location>
</feature>
<feature type="turn" evidence="6">
    <location>
        <begin position="67"/>
        <end position="69"/>
    </location>
</feature>
<feature type="helix" evidence="6">
    <location>
        <begin position="72"/>
        <end position="75"/>
    </location>
</feature>
<feature type="turn" evidence="6">
    <location>
        <begin position="76"/>
        <end position="79"/>
    </location>
</feature>
<feature type="helix" evidence="6">
    <location>
        <begin position="84"/>
        <end position="86"/>
    </location>
</feature>
<feature type="helix" evidence="6">
    <location>
        <begin position="89"/>
        <end position="101"/>
    </location>
</feature>
<feature type="helix" evidence="6">
    <location>
        <begin position="105"/>
        <end position="129"/>
    </location>
</feature>
<feature type="helix" evidence="6">
    <location>
        <begin position="134"/>
        <end position="150"/>
    </location>
</feature>
<feature type="helix" evidence="6">
    <location>
        <begin position="156"/>
        <end position="158"/>
    </location>
</feature>
<feature type="helix" evidence="6">
    <location>
        <begin position="159"/>
        <end position="172"/>
    </location>
</feature>
<feature type="helix" evidence="6">
    <location>
        <begin position="178"/>
        <end position="202"/>
    </location>
</feature>
<feature type="helix" evidence="6">
    <location>
        <begin position="213"/>
        <end position="219"/>
    </location>
</feature>
<feature type="helix" evidence="6">
    <location>
        <begin position="230"/>
        <end position="260"/>
    </location>
</feature>
<feature type="helix" evidence="6">
    <location>
        <begin position="263"/>
        <end position="270"/>
    </location>
</feature>
<feature type="helix" evidence="6">
    <location>
        <begin position="273"/>
        <end position="286"/>
    </location>
</feature>
<feature type="strand" evidence="6">
    <location>
        <begin position="292"/>
        <end position="297"/>
    </location>
</feature>
<feature type="strand" evidence="6">
    <location>
        <begin position="301"/>
        <end position="303"/>
    </location>
</feature>
<feature type="strand" evidence="6">
    <location>
        <begin position="306"/>
        <end position="308"/>
    </location>
</feature>
<feature type="strand" evidence="6">
    <location>
        <begin position="313"/>
        <end position="317"/>
    </location>
</feature>
<feature type="helix" evidence="6">
    <location>
        <begin position="318"/>
        <end position="322"/>
    </location>
</feature>
<feature type="turn" evidence="6">
    <location>
        <begin position="325"/>
        <end position="327"/>
    </location>
</feature>
<feature type="strand" evidence="6">
    <location>
        <begin position="328"/>
        <end position="330"/>
    </location>
</feature>
<feature type="helix" evidence="6">
    <location>
        <begin position="336"/>
        <end position="339"/>
    </location>
</feature>
<feature type="strand" evidence="6">
    <location>
        <begin position="346"/>
        <end position="348"/>
    </location>
</feature>
<feature type="strand" evidence="5">
    <location>
        <begin position="359"/>
        <end position="361"/>
    </location>
</feature>
<feature type="helix" evidence="6">
    <location>
        <begin position="366"/>
        <end position="382"/>
    </location>
</feature>
<feature type="strand" evidence="6">
    <location>
        <begin position="384"/>
        <end position="387"/>
    </location>
</feature>
<feature type="strand" evidence="6">
    <location>
        <begin position="397"/>
        <end position="401"/>
    </location>
</feature>
<feature type="strand" evidence="6">
    <location>
        <begin position="409"/>
        <end position="415"/>
    </location>
</feature>
<dbReference type="EC" id="1.11.2.4" evidence="1"/>
<dbReference type="EMBL" id="AB006424">
    <property type="protein sequence ID" value="BAA33107.1"/>
    <property type="molecule type" value="Genomic_DNA"/>
</dbReference>
<dbReference type="EMBL" id="AL009126">
    <property type="protein sequence ID" value="CAB12004.1"/>
    <property type="molecule type" value="Genomic_DNA"/>
</dbReference>
<dbReference type="PIR" id="C69748">
    <property type="entry name" value="C69748"/>
</dbReference>
<dbReference type="RefSeq" id="NP_388092.1">
    <property type="nucleotide sequence ID" value="NC_000964.3"/>
</dbReference>
<dbReference type="RefSeq" id="WP_003246284.1">
    <property type="nucleotide sequence ID" value="NZ_OZ025638.1"/>
</dbReference>
<dbReference type="PDB" id="1IZO">
    <property type="method" value="X-ray"/>
    <property type="resolution" value="2.10 A"/>
    <property type="chains" value="A/B/C=1-417"/>
</dbReference>
<dbReference type="PDB" id="2ZQJ">
    <property type="method" value="X-ray"/>
    <property type="resolution" value="2.90 A"/>
    <property type="chains" value="A/B/C=1-417"/>
</dbReference>
<dbReference type="PDB" id="2ZQX">
    <property type="method" value="X-ray"/>
    <property type="resolution" value="2.37 A"/>
    <property type="chains" value="A/B/C=1-417"/>
</dbReference>
<dbReference type="PDB" id="7WYG">
    <property type="method" value="X-ray"/>
    <property type="resolution" value="2.00 A"/>
    <property type="chains" value="A/B=3-417"/>
</dbReference>
<dbReference type="PDBsum" id="1IZO"/>
<dbReference type="PDBsum" id="2ZQJ"/>
<dbReference type="PDBsum" id="2ZQX"/>
<dbReference type="PDBsum" id="7WYG"/>
<dbReference type="SMR" id="O31440"/>
<dbReference type="FunCoup" id="O31440">
    <property type="interactions" value="53"/>
</dbReference>
<dbReference type="STRING" id="224308.BSU02100"/>
<dbReference type="DrugBank" id="DB04257">
    <property type="generic name" value="Palmitoleic Acid"/>
</dbReference>
<dbReference type="SwissLipids" id="SLP:000001181"/>
<dbReference type="PaxDb" id="224308-BSU02100"/>
<dbReference type="EnsemblBacteria" id="CAB12004">
    <property type="protein sequence ID" value="CAB12004"/>
    <property type="gene ID" value="BSU_02100"/>
</dbReference>
<dbReference type="GeneID" id="938449"/>
<dbReference type="KEGG" id="bsu:BSU02100"/>
<dbReference type="PATRIC" id="fig|224308.179.peg.216"/>
<dbReference type="eggNOG" id="COG2124">
    <property type="taxonomic scope" value="Bacteria"/>
</dbReference>
<dbReference type="InParanoid" id="O31440"/>
<dbReference type="OrthoDB" id="9764248at2"/>
<dbReference type="PhylomeDB" id="O31440"/>
<dbReference type="BioCyc" id="BSUB:BSU02100-MONOMER"/>
<dbReference type="BioCyc" id="MetaCyc:BSU02100-MONOMER"/>
<dbReference type="BRENDA" id="1.11.2.4">
    <property type="organism ID" value="658"/>
</dbReference>
<dbReference type="EvolutionaryTrace" id="O31440"/>
<dbReference type="Proteomes" id="UP000001570">
    <property type="component" value="Chromosome"/>
</dbReference>
<dbReference type="GO" id="GO:0020037">
    <property type="term" value="F:heme binding"/>
    <property type="evidence" value="ECO:0007669"/>
    <property type="project" value="InterPro"/>
</dbReference>
<dbReference type="GO" id="GO:0005506">
    <property type="term" value="F:iron ion binding"/>
    <property type="evidence" value="ECO:0007669"/>
    <property type="project" value="InterPro"/>
</dbReference>
<dbReference type="GO" id="GO:0004497">
    <property type="term" value="F:monooxygenase activity"/>
    <property type="evidence" value="ECO:0007669"/>
    <property type="project" value="UniProtKB-KW"/>
</dbReference>
<dbReference type="GO" id="GO:0016705">
    <property type="term" value="F:oxidoreductase activity, acting on paired donors, with incorporation or reduction of molecular oxygen"/>
    <property type="evidence" value="ECO:0007669"/>
    <property type="project" value="InterPro"/>
</dbReference>
<dbReference type="CDD" id="cd11067">
    <property type="entry name" value="CYP152"/>
    <property type="match status" value="1"/>
</dbReference>
<dbReference type="FunFam" id="1.10.630.10:FF:000185">
    <property type="entry name" value="Fatty-acid peroxygenase"/>
    <property type="match status" value="1"/>
</dbReference>
<dbReference type="Gene3D" id="1.10.630.10">
    <property type="entry name" value="Cytochrome P450"/>
    <property type="match status" value="1"/>
</dbReference>
<dbReference type="InterPro" id="IPR001128">
    <property type="entry name" value="Cyt_P450"/>
</dbReference>
<dbReference type="InterPro" id="IPR002401">
    <property type="entry name" value="Cyt_P450_E_grp-I"/>
</dbReference>
<dbReference type="InterPro" id="IPR036396">
    <property type="entry name" value="Cyt_P450_sf"/>
</dbReference>
<dbReference type="InterPro" id="IPR050705">
    <property type="entry name" value="Cytochrome_P450_3A"/>
</dbReference>
<dbReference type="PANTHER" id="PTHR24302">
    <property type="entry name" value="CYTOCHROME P450 FAMILY 3"/>
    <property type="match status" value="1"/>
</dbReference>
<dbReference type="PANTHER" id="PTHR24302:SF15">
    <property type="entry name" value="FATTY-ACID PEROXYGENASE"/>
    <property type="match status" value="1"/>
</dbReference>
<dbReference type="Pfam" id="PF00067">
    <property type="entry name" value="p450"/>
    <property type="match status" value="1"/>
</dbReference>
<dbReference type="PRINTS" id="PR00463">
    <property type="entry name" value="EP450I"/>
</dbReference>
<dbReference type="SUPFAM" id="SSF48264">
    <property type="entry name" value="Cytochrome P450"/>
    <property type="match status" value="1"/>
</dbReference>
<proteinExistence type="evidence at protein level"/>
<evidence type="ECO:0000269" key="1">
    <source>
    </source>
</evidence>
<evidence type="ECO:0000269" key="2">
    <source>
    </source>
</evidence>
<evidence type="ECO:0000305" key="3"/>
<evidence type="ECO:0007744" key="4">
    <source>
        <dbReference type="PDB" id="1IZO"/>
    </source>
</evidence>
<evidence type="ECO:0007829" key="5">
    <source>
        <dbReference type="PDB" id="1IZO"/>
    </source>
</evidence>
<evidence type="ECO:0007829" key="6">
    <source>
        <dbReference type="PDB" id="7WYG"/>
    </source>
</evidence>
<gene>
    <name type="primary">cypC</name>
    <name type="synonym">CYP152A1</name>
    <name type="ordered locus">BSU02100</name>
</gene>
<comment type="function">
    <text evidence="1">Catalyzes the alpha- and beta-hydroxylation of myristic acid in the presence of hydrogen peroxide.</text>
</comment>
<comment type="catalytic activity">
    <reaction evidence="1">
        <text>a 1,2-saturated fatty acid + H2O2 = a 2-hydroxy fatty acid + H2O</text>
        <dbReference type="Rhea" id="RHEA:48360"/>
        <dbReference type="ChEBI" id="CHEBI:15377"/>
        <dbReference type="ChEBI" id="CHEBI:16240"/>
        <dbReference type="ChEBI" id="CHEBI:76176"/>
        <dbReference type="ChEBI" id="CHEBI:83955"/>
        <dbReference type="EC" id="1.11.2.4"/>
    </reaction>
    <physiologicalReaction direction="left-to-right" evidence="1">
        <dbReference type="Rhea" id="RHEA:48361"/>
    </physiologicalReaction>
</comment>
<comment type="catalytic activity">
    <reaction evidence="1">
        <text>a 2,3-saturated fatty acid + H2O2 = a 3-hydroxy fatty acid + H2O</text>
        <dbReference type="Rhea" id="RHEA:48384"/>
        <dbReference type="ChEBI" id="CHEBI:15377"/>
        <dbReference type="ChEBI" id="CHEBI:16240"/>
        <dbReference type="ChEBI" id="CHEBI:76928"/>
        <dbReference type="ChEBI" id="CHEBI:84196"/>
        <dbReference type="EC" id="1.11.2.4"/>
    </reaction>
    <physiologicalReaction direction="left-to-right" evidence="1">
        <dbReference type="Rhea" id="RHEA:48385"/>
    </physiologicalReaction>
</comment>
<comment type="catalytic activity">
    <reaction evidence="1">
        <text>tetradecanoate + H2O2 = (3R)-hydroxytetradecanoate + H2O</text>
        <dbReference type="Rhea" id="RHEA:46024"/>
        <dbReference type="ChEBI" id="CHEBI:15377"/>
        <dbReference type="ChEBI" id="CHEBI:16240"/>
        <dbReference type="ChEBI" id="CHEBI:30807"/>
        <dbReference type="ChEBI" id="CHEBI:85635"/>
        <dbReference type="EC" id="1.11.2.4"/>
    </reaction>
    <physiologicalReaction direction="left-to-right" evidence="1">
        <dbReference type="Rhea" id="RHEA:46025"/>
    </physiologicalReaction>
</comment>
<comment type="catalytic activity">
    <reaction evidence="1">
        <text>tetradecanoate + H2O2 = (2R)-hydroxytetradecanoate + H2O</text>
        <dbReference type="Rhea" id="RHEA:46028"/>
        <dbReference type="ChEBI" id="CHEBI:15377"/>
        <dbReference type="ChEBI" id="CHEBI:16240"/>
        <dbReference type="ChEBI" id="CHEBI:30807"/>
        <dbReference type="ChEBI" id="CHEBI:85636"/>
        <dbReference type="EC" id="1.11.2.4"/>
    </reaction>
    <physiologicalReaction direction="left-to-right" evidence="1">
        <dbReference type="Rhea" id="RHEA:46029"/>
    </physiologicalReaction>
</comment>
<comment type="catalytic activity">
    <reaction evidence="1">
        <text>tetradecanoate + H2O2 = (2S)-hydroxytetradecanoate + H2O</text>
        <dbReference type="Rhea" id="RHEA:46032"/>
        <dbReference type="ChEBI" id="CHEBI:15377"/>
        <dbReference type="ChEBI" id="CHEBI:16240"/>
        <dbReference type="ChEBI" id="CHEBI:30807"/>
        <dbReference type="ChEBI" id="CHEBI:85637"/>
        <dbReference type="EC" id="1.11.2.4"/>
    </reaction>
    <physiologicalReaction direction="left-to-right" evidence="1">
        <dbReference type="Rhea" id="RHEA:46033"/>
    </physiologicalReaction>
</comment>
<comment type="cofactor">
    <cofactor evidence="2">
        <name>heme</name>
        <dbReference type="ChEBI" id="CHEBI:30413"/>
    </cofactor>
</comment>
<comment type="similarity">
    <text evidence="3">Belongs to the cytochrome P450 family.</text>
</comment>
<protein>
    <recommendedName>
        <fullName>Fatty-acid peroxygenase</fullName>
        <ecNumber evidence="1">1.11.2.4</ecNumber>
    </recommendedName>
    <alternativeName>
        <fullName>Cytochrome P450 152A1</fullName>
    </alternativeName>
    <alternativeName>
        <fullName>Cytochrome P450BsBeta</fullName>
    </alternativeName>
    <alternativeName>
        <fullName>Fatty acid beta-hydroxylase</fullName>
    </alternativeName>
</protein>